<comment type="function">
    <text evidence="1">Phosphorylates thymidine. ASFV replicates in the cytoplasm of infected cells and contains genes encoding a number of enzymes needed for DNA synthesis, including thymidine kinase. Important for growth in swine macrophages in vitro and is a virus virulence factor in swine (By similarity).</text>
</comment>
<comment type="catalytic activity">
    <reaction>
        <text>thymidine + ATP = dTMP + ADP + H(+)</text>
        <dbReference type="Rhea" id="RHEA:19129"/>
        <dbReference type="ChEBI" id="CHEBI:15378"/>
        <dbReference type="ChEBI" id="CHEBI:17748"/>
        <dbReference type="ChEBI" id="CHEBI:30616"/>
        <dbReference type="ChEBI" id="CHEBI:63528"/>
        <dbReference type="ChEBI" id="CHEBI:456216"/>
        <dbReference type="EC" id="2.7.1.21"/>
    </reaction>
</comment>
<comment type="similarity">
    <text evidence="3">Belongs to the thymidine kinase family.</text>
</comment>
<gene>
    <name type="ordered locus">Ba71V-050</name>
    <name type="ORF">K196R</name>
</gene>
<evidence type="ECO:0000250" key="1"/>
<evidence type="ECO:0000255" key="2"/>
<evidence type="ECO:0000305" key="3"/>
<dbReference type="EC" id="2.7.1.21"/>
<dbReference type="EMBL" id="Z21490">
    <property type="protein sequence ID" value="CAG33722.1"/>
    <property type="molecule type" value="Genomic_DNA"/>
</dbReference>
<dbReference type="EMBL" id="M63119">
    <property type="protein sequence ID" value="AAA42737.1"/>
    <property type="molecule type" value="Genomic_DNA"/>
</dbReference>
<dbReference type="EMBL" id="U18466">
    <property type="protein sequence ID" value="AAA65280.1"/>
    <property type="molecule type" value="Genomic_DNA"/>
</dbReference>
<dbReference type="PIR" id="A37079">
    <property type="entry name" value="KIXFAS"/>
</dbReference>
<dbReference type="RefSeq" id="NP_042744.1">
    <property type="nucleotide sequence ID" value="NC_001659.2"/>
</dbReference>
<dbReference type="SMR" id="P18555"/>
<dbReference type="GeneID" id="22220432"/>
<dbReference type="KEGG" id="vg:22220432"/>
<dbReference type="Proteomes" id="UP000000624">
    <property type="component" value="Segment"/>
</dbReference>
<dbReference type="GO" id="GO:0005524">
    <property type="term" value="F:ATP binding"/>
    <property type="evidence" value="ECO:0007669"/>
    <property type="project" value="UniProtKB-KW"/>
</dbReference>
<dbReference type="GO" id="GO:0046872">
    <property type="term" value="F:metal ion binding"/>
    <property type="evidence" value="ECO:0007669"/>
    <property type="project" value="UniProtKB-KW"/>
</dbReference>
<dbReference type="GO" id="GO:0004797">
    <property type="term" value="F:thymidine kinase activity"/>
    <property type="evidence" value="ECO:0007669"/>
    <property type="project" value="UniProtKB-EC"/>
</dbReference>
<dbReference type="GO" id="GO:0071897">
    <property type="term" value="P:DNA biosynthetic process"/>
    <property type="evidence" value="ECO:0007669"/>
    <property type="project" value="UniProtKB-KW"/>
</dbReference>
<dbReference type="GO" id="GO:0046104">
    <property type="term" value="P:thymidine metabolic process"/>
    <property type="evidence" value="ECO:0007669"/>
    <property type="project" value="TreeGrafter"/>
</dbReference>
<dbReference type="Gene3D" id="3.30.60.20">
    <property type="match status" value="1"/>
</dbReference>
<dbReference type="Gene3D" id="3.40.50.300">
    <property type="entry name" value="P-loop containing nucleotide triphosphate hydrolases"/>
    <property type="match status" value="1"/>
</dbReference>
<dbReference type="InterPro" id="IPR027417">
    <property type="entry name" value="P-loop_NTPase"/>
</dbReference>
<dbReference type="InterPro" id="IPR001267">
    <property type="entry name" value="Thymidine_kinase"/>
</dbReference>
<dbReference type="InterPro" id="IPR020633">
    <property type="entry name" value="Thymidine_kinase_CS"/>
</dbReference>
<dbReference type="PANTHER" id="PTHR11441">
    <property type="entry name" value="THYMIDINE KINASE"/>
    <property type="match status" value="1"/>
</dbReference>
<dbReference type="PANTHER" id="PTHR11441:SF0">
    <property type="entry name" value="THYMIDINE KINASE, CYTOSOLIC"/>
    <property type="match status" value="1"/>
</dbReference>
<dbReference type="Pfam" id="PF00265">
    <property type="entry name" value="TK"/>
    <property type="match status" value="1"/>
</dbReference>
<dbReference type="PIRSF" id="PIRSF035805">
    <property type="entry name" value="TK_cell"/>
    <property type="match status" value="1"/>
</dbReference>
<dbReference type="SUPFAM" id="SSF52540">
    <property type="entry name" value="P-loop containing nucleoside triphosphate hydrolases"/>
    <property type="match status" value="1"/>
</dbReference>
<dbReference type="PROSITE" id="PS00603">
    <property type="entry name" value="TK_CELLULAR_TYPE"/>
    <property type="match status" value="1"/>
</dbReference>
<sequence>MNIIRKLKPGTISLVLGPMFAGKTTFLIHCIYMLERLEKKVVFIKSTKNTRDKTIKTHSGIQLRPKQCKIIESTQLSDVGSLTDIHAVVVDEAHFFDDLIKCRTWAEEEKIIILAGLNASFEQKMFPPIVRIFPYCSWVKYIGRTCMKCNQHNACFNVRKNADKTLILAGGSELYVTCCNNCLKNTFIKQLQPIKY</sequence>
<protein>
    <recommendedName>
        <fullName>Thymidine kinase</fullName>
        <shortName>TDK</shortName>
        <ecNumber>2.7.1.21</ecNumber>
    </recommendedName>
</protein>
<organism>
    <name type="scientific">African swine fever virus (strain Badajoz 1971 Vero-adapted)</name>
    <name type="common">Ba71V</name>
    <name type="synonym">ASFV</name>
    <dbReference type="NCBI Taxonomy" id="10498"/>
    <lineage>
        <taxon>Viruses</taxon>
        <taxon>Varidnaviria</taxon>
        <taxon>Bamfordvirae</taxon>
        <taxon>Nucleocytoviricota</taxon>
        <taxon>Pokkesviricetes</taxon>
        <taxon>Asfuvirales</taxon>
        <taxon>Asfarviridae</taxon>
        <taxon>Asfivirus</taxon>
        <taxon>African swine fever virus</taxon>
    </lineage>
</organism>
<name>KITH_ASFB7</name>
<reference key="1">
    <citation type="journal article" date="1990" name="Virology">
        <title>Sequence and evolutionary relationships of African swine fever virus thymidine kinase.</title>
        <authorList>
            <person name="Blasco R."/>
            <person name="Lopez-Otin C."/>
            <person name="Munoz M."/>
            <person name="Bockamp E.-O."/>
            <person name="Simon-Mateo C."/>
            <person name="Vinuela E."/>
        </authorList>
    </citation>
    <scope>NUCLEOTIDE SEQUENCE [GENOMIC DNA]</scope>
    <scope>IDENTIFICATION</scope>
</reference>
<reference key="2">
    <citation type="journal article" date="1991" name="J. Virol.">
        <title>Expression and characterization of the thymidine kinase gene of African swine fever virus.</title>
        <authorList>
            <person name="Hernandez A.M."/>
            <person name="Taberes E."/>
        </authorList>
    </citation>
    <scope>NUCLEOTIDE SEQUENCE [GENOMIC DNA]</scope>
</reference>
<reference key="3">
    <citation type="journal article" date="1995" name="Virology">
        <title>Analysis of the complete nucleotide sequence of African swine fever virus.</title>
        <authorList>
            <person name="Yanez R.J."/>
            <person name="Rodriguez J.M."/>
            <person name="Nogal M.L."/>
            <person name="Yuste L."/>
            <person name="Enriquez C."/>
            <person name="Rodriguez J.F."/>
            <person name="Vinuela E."/>
        </authorList>
    </citation>
    <scope>NUCLEOTIDE SEQUENCE [LARGE SCALE GENOMIC DNA]</scope>
</reference>
<organismHost>
    <name type="scientific">Ornithodoros</name>
    <name type="common">relapsing fever ticks</name>
    <dbReference type="NCBI Taxonomy" id="6937"/>
</organismHost>
<organismHost>
    <name type="scientific">Sus scrofa</name>
    <name type="common">Pig</name>
    <dbReference type="NCBI Taxonomy" id="9823"/>
</organismHost>
<proteinExistence type="inferred from homology"/>
<feature type="chain" id="PRO_0000174927" description="Thymidine kinase">
    <location>
        <begin position="1"/>
        <end position="196"/>
    </location>
</feature>
<feature type="active site" description="Proton acceptor" evidence="2">
    <location>
        <position position="92"/>
    </location>
</feature>
<feature type="binding site" evidence="3">
    <location>
        <begin position="17"/>
        <end position="24"/>
    </location>
    <ligand>
        <name>ATP</name>
        <dbReference type="ChEBI" id="CHEBI:30616"/>
    </ligand>
</feature>
<feature type="binding site" evidence="1">
    <location>
        <position position="121"/>
    </location>
    <ligand>
        <name>substrate</name>
    </ligand>
</feature>
<feature type="binding site" evidence="1">
    <location>
        <position position="146"/>
    </location>
    <ligand>
        <name>Zn(2+)</name>
        <dbReference type="ChEBI" id="CHEBI:29105"/>
    </ligand>
</feature>
<feature type="binding site" evidence="1">
    <location>
        <position position="149"/>
    </location>
    <ligand>
        <name>Zn(2+)</name>
        <dbReference type="ChEBI" id="CHEBI:29105"/>
    </ligand>
</feature>
<feature type="binding site" evidence="1">
    <location>
        <begin position="166"/>
        <end position="170"/>
    </location>
    <ligand>
        <name>substrate</name>
    </ligand>
</feature>
<feature type="binding site" evidence="1">
    <location>
        <position position="179"/>
    </location>
    <ligand>
        <name>Zn(2+)</name>
        <dbReference type="ChEBI" id="CHEBI:29105"/>
    </ligand>
</feature>
<feature type="binding site" evidence="1">
    <location>
        <position position="182"/>
    </location>
    <ligand>
        <name>Zn(2+)</name>
        <dbReference type="ChEBI" id="CHEBI:29105"/>
    </ligand>
</feature>
<keyword id="KW-0067">ATP-binding</keyword>
<keyword id="KW-0237">DNA synthesis</keyword>
<keyword id="KW-0418">Kinase</keyword>
<keyword id="KW-0479">Metal-binding</keyword>
<keyword id="KW-0547">Nucleotide-binding</keyword>
<keyword id="KW-1185">Reference proteome</keyword>
<keyword id="KW-0808">Transferase</keyword>
<keyword id="KW-0843">Virulence</keyword>
<keyword id="KW-0862">Zinc</keyword>
<accession>P18555</accession>